<proteinExistence type="inferred from homology"/>
<evidence type="ECO:0000255" key="1">
    <source>
        <dbReference type="HAMAP-Rule" id="MF_00254"/>
    </source>
</evidence>
<name>SYGA_POLNS</name>
<dbReference type="EC" id="6.1.1.14" evidence="1"/>
<dbReference type="EMBL" id="CP001010">
    <property type="protein sequence ID" value="ACB44645.1"/>
    <property type="molecule type" value="Genomic_DNA"/>
</dbReference>
<dbReference type="SMR" id="B1XS10"/>
<dbReference type="STRING" id="452638.Pnec_1567"/>
<dbReference type="KEGG" id="pne:Pnec_1567"/>
<dbReference type="eggNOG" id="COG0752">
    <property type="taxonomic scope" value="Bacteria"/>
</dbReference>
<dbReference type="HOGENOM" id="CLU_057066_1_0_4"/>
<dbReference type="OrthoDB" id="9802183at2"/>
<dbReference type="GO" id="GO:0005829">
    <property type="term" value="C:cytosol"/>
    <property type="evidence" value="ECO:0007669"/>
    <property type="project" value="TreeGrafter"/>
</dbReference>
<dbReference type="GO" id="GO:0005524">
    <property type="term" value="F:ATP binding"/>
    <property type="evidence" value="ECO:0007669"/>
    <property type="project" value="UniProtKB-UniRule"/>
</dbReference>
<dbReference type="GO" id="GO:0004820">
    <property type="term" value="F:glycine-tRNA ligase activity"/>
    <property type="evidence" value="ECO:0007669"/>
    <property type="project" value="UniProtKB-UniRule"/>
</dbReference>
<dbReference type="GO" id="GO:0006426">
    <property type="term" value="P:glycyl-tRNA aminoacylation"/>
    <property type="evidence" value="ECO:0007669"/>
    <property type="project" value="UniProtKB-UniRule"/>
</dbReference>
<dbReference type="CDD" id="cd00733">
    <property type="entry name" value="GlyRS_alpha_core"/>
    <property type="match status" value="1"/>
</dbReference>
<dbReference type="FunFam" id="3.30.930.10:FF:000006">
    <property type="entry name" value="Glycine--tRNA ligase alpha subunit"/>
    <property type="match status" value="1"/>
</dbReference>
<dbReference type="Gene3D" id="3.30.930.10">
    <property type="entry name" value="Bira Bifunctional Protein, Domain 2"/>
    <property type="match status" value="1"/>
</dbReference>
<dbReference type="Gene3D" id="1.20.58.180">
    <property type="entry name" value="Class II aaRS and biotin synthetases, domain 2"/>
    <property type="match status" value="1"/>
</dbReference>
<dbReference type="HAMAP" id="MF_00254">
    <property type="entry name" value="Gly_tRNA_synth_alpha"/>
    <property type="match status" value="1"/>
</dbReference>
<dbReference type="InterPro" id="IPR045864">
    <property type="entry name" value="aa-tRNA-synth_II/BPL/LPL"/>
</dbReference>
<dbReference type="InterPro" id="IPR006194">
    <property type="entry name" value="Gly-tRNA-synth_heterodimer"/>
</dbReference>
<dbReference type="InterPro" id="IPR002310">
    <property type="entry name" value="Gly-tRNA_ligase_asu"/>
</dbReference>
<dbReference type="NCBIfam" id="TIGR00388">
    <property type="entry name" value="glyQ"/>
    <property type="match status" value="1"/>
</dbReference>
<dbReference type="NCBIfam" id="NF006827">
    <property type="entry name" value="PRK09348.1"/>
    <property type="match status" value="1"/>
</dbReference>
<dbReference type="PANTHER" id="PTHR30075:SF2">
    <property type="entry name" value="GLYCINE--TRNA LIGASE, CHLOROPLASTIC_MITOCHONDRIAL 2"/>
    <property type="match status" value="1"/>
</dbReference>
<dbReference type="PANTHER" id="PTHR30075">
    <property type="entry name" value="GLYCYL-TRNA SYNTHETASE"/>
    <property type="match status" value="1"/>
</dbReference>
<dbReference type="Pfam" id="PF02091">
    <property type="entry name" value="tRNA-synt_2e"/>
    <property type="match status" value="1"/>
</dbReference>
<dbReference type="PRINTS" id="PR01044">
    <property type="entry name" value="TRNASYNTHGA"/>
</dbReference>
<dbReference type="SUPFAM" id="SSF55681">
    <property type="entry name" value="Class II aaRS and biotin synthetases"/>
    <property type="match status" value="1"/>
</dbReference>
<dbReference type="PROSITE" id="PS50861">
    <property type="entry name" value="AA_TRNA_LIGASE_II_GLYAB"/>
    <property type="match status" value="1"/>
</dbReference>
<comment type="catalytic activity">
    <reaction evidence="1">
        <text>tRNA(Gly) + glycine + ATP = glycyl-tRNA(Gly) + AMP + diphosphate</text>
        <dbReference type="Rhea" id="RHEA:16013"/>
        <dbReference type="Rhea" id="RHEA-COMP:9664"/>
        <dbReference type="Rhea" id="RHEA-COMP:9683"/>
        <dbReference type="ChEBI" id="CHEBI:30616"/>
        <dbReference type="ChEBI" id="CHEBI:33019"/>
        <dbReference type="ChEBI" id="CHEBI:57305"/>
        <dbReference type="ChEBI" id="CHEBI:78442"/>
        <dbReference type="ChEBI" id="CHEBI:78522"/>
        <dbReference type="ChEBI" id="CHEBI:456215"/>
        <dbReference type="EC" id="6.1.1.14"/>
    </reaction>
</comment>
<comment type="subunit">
    <text evidence="1">Tetramer of two alpha and two beta subunits.</text>
</comment>
<comment type="subcellular location">
    <subcellularLocation>
        <location evidence="1">Cytoplasm</location>
    </subcellularLocation>
</comment>
<comment type="similarity">
    <text evidence="1">Belongs to the class-II aminoacyl-tRNA synthetase family.</text>
</comment>
<sequence length="296" mass="33666">MLTFQQIILKLQDYWDQQGCALLQPIDLEVGAGTSHTATFLRAIGPEPWKAAYVQPSRRPKDGRYGENPNRLQHYYQYQVVLKPAPENILDLYLGSLAALGLDLKENDVRFVEDGWENPTLGAWGLGWEVWLNGMEVTQFTYFQQVGGLDCKPVLGEITYGIERLAMYIQNCSNVYDLVWADGISYGDVYHQNEVEQSCYNFEHSNTDLLFANFTNYESEAKRLMEVPLALPAYEMVLKAAYTFNLLDARGAISVTERAAYIGRIRNLSRAVAQAYFESREKLGFPMCQRPARAKA</sequence>
<reference key="1">
    <citation type="journal article" date="2013" name="Proc. Natl. Acad. Sci. U.S.A.">
        <title>Polynucleobacter necessarius, a model for genome reduction in both free-living and symbiotic bacteria.</title>
        <authorList>
            <person name="Boscaro V."/>
            <person name="Felletti M."/>
            <person name="Vannini C."/>
            <person name="Ackerman M.S."/>
            <person name="Chain P.S."/>
            <person name="Malfatti S."/>
            <person name="Vergez L.M."/>
            <person name="Shin M."/>
            <person name="Doak T.G."/>
            <person name="Lynch M."/>
            <person name="Petroni G."/>
        </authorList>
    </citation>
    <scope>NUCLEOTIDE SEQUENCE [LARGE SCALE GENOMIC DNA]</scope>
    <source>
        <strain>STIR1</strain>
    </source>
</reference>
<protein>
    <recommendedName>
        <fullName evidence="1">Glycine--tRNA ligase alpha subunit</fullName>
        <ecNumber evidence="1">6.1.1.14</ecNumber>
    </recommendedName>
    <alternativeName>
        <fullName evidence="1">Glycyl-tRNA synthetase alpha subunit</fullName>
        <shortName evidence="1">GlyRS</shortName>
    </alternativeName>
</protein>
<organism>
    <name type="scientific">Polynucleobacter necessarius subsp. necessarius (strain STIR1)</name>
    <dbReference type="NCBI Taxonomy" id="452638"/>
    <lineage>
        <taxon>Bacteria</taxon>
        <taxon>Pseudomonadati</taxon>
        <taxon>Pseudomonadota</taxon>
        <taxon>Betaproteobacteria</taxon>
        <taxon>Burkholderiales</taxon>
        <taxon>Burkholderiaceae</taxon>
        <taxon>Polynucleobacter</taxon>
    </lineage>
</organism>
<keyword id="KW-0030">Aminoacyl-tRNA synthetase</keyword>
<keyword id="KW-0067">ATP-binding</keyword>
<keyword id="KW-0963">Cytoplasm</keyword>
<keyword id="KW-0436">Ligase</keyword>
<keyword id="KW-0547">Nucleotide-binding</keyword>
<keyword id="KW-0648">Protein biosynthesis</keyword>
<gene>
    <name evidence="1" type="primary">glyQ</name>
    <name type="ordered locus">Pnec_1567</name>
</gene>
<accession>B1XS10</accession>
<feature type="chain" id="PRO_1000101214" description="Glycine--tRNA ligase alpha subunit">
    <location>
        <begin position="1"/>
        <end position="296"/>
    </location>
</feature>